<proteinExistence type="inferred from homology"/>
<name>TOLB_VIBCM</name>
<reference key="1">
    <citation type="journal article" date="2008" name="PLoS ONE">
        <title>A recalibrated molecular clock and independent origins for the cholera pandemic clones.</title>
        <authorList>
            <person name="Feng L."/>
            <person name="Reeves P.R."/>
            <person name="Lan R."/>
            <person name="Ren Y."/>
            <person name="Gao C."/>
            <person name="Zhou Z."/>
            <person name="Ren Y."/>
            <person name="Cheng J."/>
            <person name="Wang W."/>
            <person name="Wang J."/>
            <person name="Qian W."/>
            <person name="Li D."/>
            <person name="Wang L."/>
        </authorList>
    </citation>
    <scope>NUCLEOTIDE SEQUENCE [LARGE SCALE GENOMIC DNA]</scope>
    <source>
        <strain>M66-2</strain>
    </source>
</reference>
<comment type="function">
    <text evidence="1">Part of the Tol-Pal system, which plays a role in outer membrane invagination during cell division and is important for maintaining outer membrane integrity.</text>
</comment>
<comment type="subunit">
    <text evidence="1">The Tol-Pal system is composed of five core proteins: the inner membrane proteins TolA, TolQ and TolR, the periplasmic protein TolB and the outer membrane protein Pal. They form a network linking the inner and outer membranes and the peptidoglycan layer.</text>
</comment>
<comment type="subcellular location">
    <subcellularLocation>
        <location evidence="1">Periplasm</location>
    </subcellularLocation>
</comment>
<comment type="similarity">
    <text evidence="1">Belongs to the TolB family.</text>
</comment>
<keyword id="KW-0131">Cell cycle</keyword>
<keyword id="KW-0132">Cell division</keyword>
<keyword id="KW-0574">Periplasm</keyword>
<keyword id="KW-0732">Signal</keyword>
<dbReference type="EMBL" id="CP001233">
    <property type="protein sequence ID" value="ACP06065.1"/>
    <property type="molecule type" value="Genomic_DNA"/>
</dbReference>
<dbReference type="SMR" id="C3LND9"/>
<dbReference type="KEGG" id="vcm:VCM66_1759"/>
<dbReference type="HOGENOM" id="CLU_047123_0_0_6"/>
<dbReference type="Proteomes" id="UP000001217">
    <property type="component" value="Chromosome I"/>
</dbReference>
<dbReference type="GO" id="GO:0042597">
    <property type="term" value="C:periplasmic space"/>
    <property type="evidence" value="ECO:0007669"/>
    <property type="project" value="UniProtKB-SubCell"/>
</dbReference>
<dbReference type="GO" id="GO:0051301">
    <property type="term" value="P:cell division"/>
    <property type="evidence" value="ECO:0007669"/>
    <property type="project" value="UniProtKB-UniRule"/>
</dbReference>
<dbReference type="GO" id="GO:0017038">
    <property type="term" value="P:protein import"/>
    <property type="evidence" value="ECO:0007669"/>
    <property type="project" value="InterPro"/>
</dbReference>
<dbReference type="Gene3D" id="2.120.10.30">
    <property type="entry name" value="TolB, C-terminal domain"/>
    <property type="match status" value="1"/>
</dbReference>
<dbReference type="Gene3D" id="3.40.50.10070">
    <property type="entry name" value="TolB, N-terminal domain"/>
    <property type="match status" value="1"/>
</dbReference>
<dbReference type="HAMAP" id="MF_00671">
    <property type="entry name" value="TolB"/>
    <property type="match status" value="1"/>
</dbReference>
<dbReference type="InterPro" id="IPR011042">
    <property type="entry name" value="6-blade_b-propeller_TolB-like"/>
</dbReference>
<dbReference type="InterPro" id="IPR011659">
    <property type="entry name" value="PD40"/>
</dbReference>
<dbReference type="InterPro" id="IPR014167">
    <property type="entry name" value="Tol-Pal_TolB"/>
</dbReference>
<dbReference type="InterPro" id="IPR007195">
    <property type="entry name" value="TolB_N"/>
</dbReference>
<dbReference type="NCBIfam" id="TIGR02800">
    <property type="entry name" value="propeller_TolB"/>
    <property type="match status" value="1"/>
</dbReference>
<dbReference type="PANTHER" id="PTHR36842:SF1">
    <property type="entry name" value="PROTEIN TOLB"/>
    <property type="match status" value="1"/>
</dbReference>
<dbReference type="PANTHER" id="PTHR36842">
    <property type="entry name" value="PROTEIN TOLB HOMOLOG"/>
    <property type="match status" value="1"/>
</dbReference>
<dbReference type="Pfam" id="PF07676">
    <property type="entry name" value="PD40"/>
    <property type="match status" value="3"/>
</dbReference>
<dbReference type="Pfam" id="PF04052">
    <property type="entry name" value="TolB_N"/>
    <property type="match status" value="1"/>
</dbReference>
<dbReference type="SUPFAM" id="SSF52964">
    <property type="entry name" value="TolB, N-terminal domain"/>
    <property type="match status" value="1"/>
</dbReference>
<dbReference type="SUPFAM" id="SSF69304">
    <property type="entry name" value="Tricorn protease N-terminal domain"/>
    <property type="match status" value="1"/>
</dbReference>
<sequence length="450" mass="49645">MFKRLVFVLMLIGTGFSNIANAALELVITDGIDSARPIAIVPFKWEGATKLPEDVSAVIASDLQRSGKFSPVPTSKMPQTPYSEEQVNFGKWTSMGVDSLLTGTITQNAEGSYVISYQLVDIVRGQLTQGQSKALSQDGQLVLSKDHVLFNKVATVPASRMREYAHRIADLVYEELTGERGAFLTRIAYVVVNDKDPYPYQLRIADYDGYNERLVLRSKQPLMSPAWSPDGQTLAYVSFQNGQAEIYMMNIYSGKREKLTSFPRHNGAPRFSPDGKTLALVLSKTGNLQVYTMDLATRRLTEVTSGRSNNTEPFWHPDGKSLIFTSDRGGKPQIYQVNLSGGETKRLTWQGSQNLGGQITPDGKFLVMVNRSDSGFNLAKQDLETGAMQILTKTLLDESPSIAPNGGMVIYSSIYNKANVLSMVSIDGRFKARLPATNGRVRAPAWSPFL</sequence>
<evidence type="ECO:0000255" key="1">
    <source>
        <dbReference type="HAMAP-Rule" id="MF_00671"/>
    </source>
</evidence>
<feature type="signal peptide" evidence="1">
    <location>
        <begin position="1"/>
        <end position="22"/>
    </location>
</feature>
<feature type="chain" id="PRO_1000147664" description="Tol-Pal system protein TolB" evidence="1">
    <location>
        <begin position="23"/>
        <end position="450"/>
    </location>
</feature>
<gene>
    <name evidence="1" type="primary">tolB</name>
    <name type="ordered locus">VCM66_1759</name>
</gene>
<protein>
    <recommendedName>
        <fullName evidence="1">Tol-Pal system protein TolB</fullName>
    </recommendedName>
</protein>
<organism>
    <name type="scientific">Vibrio cholerae serotype O1 (strain M66-2)</name>
    <dbReference type="NCBI Taxonomy" id="579112"/>
    <lineage>
        <taxon>Bacteria</taxon>
        <taxon>Pseudomonadati</taxon>
        <taxon>Pseudomonadota</taxon>
        <taxon>Gammaproteobacteria</taxon>
        <taxon>Vibrionales</taxon>
        <taxon>Vibrionaceae</taxon>
        <taxon>Vibrio</taxon>
    </lineage>
</organism>
<accession>C3LND9</accession>